<reference key="1">
    <citation type="journal article" date="1995" name="Science">
        <title>The minimal gene complement of Mycoplasma genitalium.</title>
        <authorList>
            <person name="Fraser C.M."/>
            <person name="Gocayne J.D."/>
            <person name="White O."/>
            <person name="Adams M.D."/>
            <person name="Clayton R.A."/>
            <person name="Fleischmann R.D."/>
            <person name="Bult C.J."/>
            <person name="Kerlavage A.R."/>
            <person name="Sutton G.G."/>
            <person name="Kelley J.M."/>
            <person name="Fritchman J.L."/>
            <person name="Weidman J.F."/>
            <person name="Small K.V."/>
            <person name="Sandusky M."/>
            <person name="Fuhrmann J.L."/>
            <person name="Nguyen D.T."/>
            <person name="Utterback T.R."/>
            <person name="Saudek D.M."/>
            <person name="Phillips C.A."/>
            <person name="Merrick J.M."/>
            <person name="Tomb J.-F."/>
            <person name="Dougherty B.A."/>
            <person name="Bott K.F."/>
            <person name="Hu P.-C."/>
            <person name="Lucier T.S."/>
            <person name="Peterson S.N."/>
            <person name="Smith H.O."/>
            <person name="Hutchison C.A. III"/>
            <person name="Venter J.C."/>
        </authorList>
    </citation>
    <scope>NUCLEOTIDE SEQUENCE [LARGE SCALE GENOMIC DNA]</scope>
    <source>
        <strain>ATCC 33530 / DSM 19775 / NCTC 10195 / G37</strain>
    </source>
</reference>
<reference key="2">
    <citation type="journal article" date="1993" name="J. Bacteriol.">
        <title>A survey of the Mycoplasma genitalium genome by using random sequencing.</title>
        <authorList>
            <person name="Peterson S.N."/>
            <person name="Hu P.-C."/>
            <person name="Bott K.F."/>
            <person name="Hutchison C.A. III"/>
        </authorList>
    </citation>
    <scope>NUCLEOTIDE SEQUENCE [GENOMIC DNA] OF 139-206</scope>
    <source>
        <strain>ATCC 33530 / DSM 19775 / NCTC 10195 / G37</strain>
    </source>
</reference>
<feature type="chain" id="PRO_0000120850" description="Uracil phosphoribosyltransferase">
    <location>
        <begin position="1"/>
        <end position="206"/>
    </location>
</feature>
<feature type="binding site" evidence="1">
    <location>
        <position position="76"/>
    </location>
    <ligand>
        <name>5-phospho-alpha-D-ribose 1-diphosphate</name>
        <dbReference type="ChEBI" id="CHEBI:58017"/>
    </ligand>
</feature>
<feature type="binding site" evidence="1">
    <location>
        <position position="101"/>
    </location>
    <ligand>
        <name>5-phospho-alpha-D-ribose 1-diphosphate</name>
        <dbReference type="ChEBI" id="CHEBI:58017"/>
    </ligand>
</feature>
<feature type="binding site" evidence="1">
    <location>
        <begin position="128"/>
        <end position="136"/>
    </location>
    <ligand>
        <name>5-phospho-alpha-D-ribose 1-diphosphate</name>
        <dbReference type="ChEBI" id="CHEBI:58017"/>
    </ligand>
</feature>
<feature type="binding site" evidence="1">
    <location>
        <position position="191"/>
    </location>
    <ligand>
        <name>uracil</name>
        <dbReference type="ChEBI" id="CHEBI:17568"/>
    </ligand>
</feature>
<feature type="binding site" evidence="1">
    <location>
        <begin position="196"/>
        <end position="198"/>
    </location>
    <ligand>
        <name>uracil</name>
        <dbReference type="ChEBI" id="CHEBI:17568"/>
    </ligand>
</feature>
<feature type="binding site" evidence="1">
    <location>
        <position position="197"/>
    </location>
    <ligand>
        <name>5-phospho-alpha-D-ribose 1-diphosphate</name>
        <dbReference type="ChEBI" id="CHEBI:58017"/>
    </ligand>
</feature>
<name>UPP_MYCGE</name>
<gene>
    <name evidence="1" type="primary">upp</name>
    <name type="ordered locus">MG030</name>
</gene>
<accession>P47276</accession>
<evidence type="ECO:0000255" key="1">
    <source>
        <dbReference type="HAMAP-Rule" id="MF_01218"/>
    </source>
</evidence>
<proteinExistence type="inferred from homology"/>
<sequence length="206" mass="22973">MIKKVQHALILNELTKLRDKNTTTSQFRMALNQITSLLFFEATKQLPLATVEVETPFAKTKGYKLKNDIVLVPIMRAGLGMIDAIVRYSDKIRVGHLGIYRQTQTTSVISYYKKMPENISDSHVIILDPMLATGTTLLTAIKSIKEDKPIKISVIAIVAAPEGINKVEKMHPHVDIFLAAIDEKLNDNRYIIPGLGDAGDRLFGTK</sequence>
<organism>
    <name type="scientific">Mycoplasma genitalium (strain ATCC 33530 / DSM 19775 / NCTC 10195 / G37)</name>
    <name type="common">Mycoplasmoides genitalium</name>
    <dbReference type="NCBI Taxonomy" id="243273"/>
    <lineage>
        <taxon>Bacteria</taxon>
        <taxon>Bacillati</taxon>
        <taxon>Mycoplasmatota</taxon>
        <taxon>Mycoplasmoidales</taxon>
        <taxon>Mycoplasmoidaceae</taxon>
        <taxon>Mycoplasmoides</taxon>
    </lineage>
</organism>
<comment type="function">
    <text evidence="1">Catalyzes the conversion of uracil and 5-phospho-alpha-D-ribose 1-diphosphate (PRPP) to UMP and diphosphate.</text>
</comment>
<comment type="catalytic activity">
    <reaction evidence="1">
        <text>UMP + diphosphate = 5-phospho-alpha-D-ribose 1-diphosphate + uracil</text>
        <dbReference type="Rhea" id="RHEA:13017"/>
        <dbReference type="ChEBI" id="CHEBI:17568"/>
        <dbReference type="ChEBI" id="CHEBI:33019"/>
        <dbReference type="ChEBI" id="CHEBI:57865"/>
        <dbReference type="ChEBI" id="CHEBI:58017"/>
        <dbReference type="EC" id="2.4.2.9"/>
    </reaction>
</comment>
<comment type="cofactor">
    <cofactor evidence="1">
        <name>Mg(2+)</name>
        <dbReference type="ChEBI" id="CHEBI:18420"/>
    </cofactor>
    <text evidence="1">Binds 1 Mg(2+) ion per subunit. The magnesium is bound as Mg-PRPP.</text>
</comment>
<comment type="activity regulation">
    <text evidence="1">Allosterically activated by GTP.</text>
</comment>
<comment type="pathway">
    <text evidence="1">Pyrimidine metabolism; UMP biosynthesis via salvage pathway; UMP from uracil: step 1/1.</text>
</comment>
<comment type="similarity">
    <text evidence="1">Belongs to the UPRTase family.</text>
</comment>
<protein>
    <recommendedName>
        <fullName evidence="1">Uracil phosphoribosyltransferase</fullName>
        <ecNumber evidence="1">2.4.2.9</ecNumber>
    </recommendedName>
    <alternativeName>
        <fullName evidence="1">UMP pyrophosphorylase</fullName>
    </alternativeName>
    <alternativeName>
        <fullName evidence="1">UPRTase</fullName>
    </alternativeName>
</protein>
<dbReference type="EC" id="2.4.2.9" evidence="1"/>
<dbReference type="EMBL" id="L43967">
    <property type="protein sequence ID" value="AAC71246.1"/>
    <property type="molecule type" value="Genomic_DNA"/>
</dbReference>
<dbReference type="EMBL" id="U01773">
    <property type="protein sequence ID" value="AAD10592.1"/>
    <property type="molecule type" value="Genomic_DNA"/>
</dbReference>
<dbReference type="PIR" id="C64203">
    <property type="entry name" value="C64203"/>
</dbReference>
<dbReference type="RefSeq" id="WP_009885912.1">
    <property type="nucleotide sequence ID" value="NC_000908.2"/>
</dbReference>
<dbReference type="SMR" id="P47276"/>
<dbReference type="FunCoup" id="P47276">
    <property type="interactions" value="176"/>
</dbReference>
<dbReference type="STRING" id="243273.MG_030"/>
<dbReference type="GeneID" id="88282145"/>
<dbReference type="KEGG" id="mge:MG_030"/>
<dbReference type="eggNOG" id="COG0035">
    <property type="taxonomic scope" value="Bacteria"/>
</dbReference>
<dbReference type="HOGENOM" id="CLU_067096_2_2_14"/>
<dbReference type="InParanoid" id="P47276"/>
<dbReference type="OrthoDB" id="9781675at2"/>
<dbReference type="BioCyc" id="MGEN243273:G1GJ2-30-MONOMER"/>
<dbReference type="UniPathway" id="UPA00574">
    <property type="reaction ID" value="UER00636"/>
</dbReference>
<dbReference type="Proteomes" id="UP000000807">
    <property type="component" value="Chromosome"/>
</dbReference>
<dbReference type="GO" id="GO:0005737">
    <property type="term" value="C:cytoplasm"/>
    <property type="evidence" value="ECO:0000318"/>
    <property type="project" value="GO_Central"/>
</dbReference>
<dbReference type="GO" id="GO:0005525">
    <property type="term" value="F:GTP binding"/>
    <property type="evidence" value="ECO:0007669"/>
    <property type="project" value="UniProtKB-KW"/>
</dbReference>
<dbReference type="GO" id="GO:0000287">
    <property type="term" value="F:magnesium ion binding"/>
    <property type="evidence" value="ECO:0007669"/>
    <property type="project" value="UniProtKB-UniRule"/>
</dbReference>
<dbReference type="GO" id="GO:0004845">
    <property type="term" value="F:uracil phosphoribosyltransferase activity"/>
    <property type="evidence" value="ECO:0000318"/>
    <property type="project" value="GO_Central"/>
</dbReference>
<dbReference type="GO" id="GO:0044206">
    <property type="term" value="P:UMP salvage"/>
    <property type="evidence" value="ECO:0007669"/>
    <property type="project" value="UniProtKB-UniRule"/>
</dbReference>
<dbReference type="GO" id="GO:0006223">
    <property type="term" value="P:uracil salvage"/>
    <property type="evidence" value="ECO:0007669"/>
    <property type="project" value="InterPro"/>
</dbReference>
<dbReference type="CDD" id="cd06223">
    <property type="entry name" value="PRTases_typeI"/>
    <property type="match status" value="1"/>
</dbReference>
<dbReference type="FunFam" id="3.40.50.2020:FF:000003">
    <property type="entry name" value="Uracil phosphoribosyltransferase"/>
    <property type="match status" value="1"/>
</dbReference>
<dbReference type="Gene3D" id="3.40.50.2020">
    <property type="match status" value="1"/>
</dbReference>
<dbReference type="HAMAP" id="MF_01218_B">
    <property type="entry name" value="Upp_B"/>
    <property type="match status" value="1"/>
</dbReference>
<dbReference type="InterPro" id="IPR000836">
    <property type="entry name" value="PRibTrfase_dom"/>
</dbReference>
<dbReference type="InterPro" id="IPR029057">
    <property type="entry name" value="PRTase-like"/>
</dbReference>
<dbReference type="InterPro" id="IPR034332">
    <property type="entry name" value="Upp_B"/>
</dbReference>
<dbReference type="InterPro" id="IPR050054">
    <property type="entry name" value="UPRTase/APRTase"/>
</dbReference>
<dbReference type="InterPro" id="IPR005765">
    <property type="entry name" value="Ura_phspho_trans"/>
</dbReference>
<dbReference type="NCBIfam" id="NF001097">
    <property type="entry name" value="PRK00129.1"/>
    <property type="match status" value="1"/>
</dbReference>
<dbReference type="NCBIfam" id="TIGR01091">
    <property type="entry name" value="upp"/>
    <property type="match status" value="1"/>
</dbReference>
<dbReference type="PANTHER" id="PTHR32315">
    <property type="entry name" value="ADENINE PHOSPHORIBOSYLTRANSFERASE"/>
    <property type="match status" value="1"/>
</dbReference>
<dbReference type="PANTHER" id="PTHR32315:SF4">
    <property type="entry name" value="URACIL PHOSPHORIBOSYLTRANSFERASE, CHLOROPLASTIC"/>
    <property type="match status" value="1"/>
</dbReference>
<dbReference type="Pfam" id="PF14681">
    <property type="entry name" value="UPRTase"/>
    <property type="match status" value="1"/>
</dbReference>
<dbReference type="SUPFAM" id="SSF53271">
    <property type="entry name" value="PRTase-like"/>
    <property type="match status" value="1"/>
</dbReference>
<keyword id="KW-0021">Allosteric enzyme</keyword>
<keyword id="KW-0328">Glycosyltransferase</keyword>
<keyword id="KW-0342">GTP-binding</keyword>
<keyword id="KW-0460">Magnesium</keyword>
<keyword id="KW-0547">Nucleotide-binding</keyword>
<keyword id="KW-1185">Reference proteome</keyword>
<keyword id="KW-0808">Transferase</keyword>